<keyword id="KW-0903">Direct protein sequencing</keyword>
<keyword id="KW-0472">Membrane</keyword>
<keyword id="KW-0496">Mitochondrion</keyword>
<keyword id="KW-0999">Mitochondrion inner membrane</keyword>
<keyword id="KW-1185">Reference proteome</keyword>
<keyword id="KW-0809">Transit peptide</keyword>
<keyword id="KW-0812">Transmembrane</keyword>
<keyword id="KW-1133">Transmembrane helix</keyword>
<gene>
    <name type="primary">Cox7b</name>
</gene>
<sequence>MLPLAKNALSRLQVRSIQQVVARQSHQKKTPTFHDKYGNAVLAGGSIFCISAWTYTATQIGIEWNLSPVGRVTPKEWRDQ</sequence>
<protein>
    <recommendedName>
        <fullName>Cytochrome c oxidase subunit 7B, mitochondrial</fullName>
    </recommendedName>
    <alternativeName>
        <fullName>Cytochrome c oxidase polypeptide VIIb</fullName>
    </alternativeName>
</protein>
<feature type="transit peptide" description="Mitochondrion" evidence="3">
    <location>
        <begin position="1"/>
        <end position="24"/>
    </location>
</feature>
<feature type="chain" id="PRO_0000006160" description="Cytochrome c oxidase subunit 7B, mitochondrial">
    <location>
        <begin position="25"/>
        <end position="80"/>
    </location>
</feature>
<feature type="topological domain" description="Mitochondrial matrix" evidence="1">
    <location>
        <begin position="25"/>
        <end position="32"/>
    </location>
</feature>
<feature type="transmembrane region" description="Helical" evidence="1">
    <location>
        <begin position="33"/>
        <end position="59"/>
    </location>
</feature>
<feature type="topological domain" description="Mitochondrial intermembrane" evidence="1">
    <location>
        <begin position="60"/>
        <end position="80"/>
    </location>
</feature>
<feature type="sequence conflict" description="In Ref. 1; AAP92332." evidence="4" ref="1">
    <original>L</original>
    <variation>I</variation>
    <location>
        <position position="9"/>
    </location>
</feature>
<name>COX7B_RAT</name>
<proteinExistence type="evidence at protein level"/>
<evidence type="ECO:0000250" key="1">
    <source>
        <dbReference type="UniProtKB" id="P13183"/>
    </source>
</evidence>
<evidence type="ECO:0000250" key="2">
    <source>
        <dbReference type="UniProtKB" id="P24311"/>
    </source>
</evidence>
<evidence type="ECO:0000269" key="3">
    <source>
    </source>
</evidence>
<evidence type="ECO:0000305" key="4"/>
<dbReference type="EMBL" id="AY339885">
    <property type="protein sequence ID" value="AAP92332.1"/>
    <property type="molecule type" value="mRNA"/>
</dbReference>
<dbReference type="EMBL" id="BC079123">
    <property type="protein sequence ID" value="AAH79123.1"/>
    <property type="molecule type" value="mRNA"/>
</dbReference>
<dbReference type="PIR" id="S65387">
    <property type="entry name" value="S65387"/>
</dbReference>
<dbReference type="RefSeq" id="NP_877971.2">
    <property type="nucleotide sequence ID" value="NM_182819.2"/>
</dbReference>
<dbReference type="SMR" id="P80431"/>
<dbReference type="CORUM" id="P80431"/>
<dbReference type="FunCoup" id="P80431">
    <property type="interactions" value="323"/>
</dbReference>
<dbReference type="STRING" id="10116.ENSRNOP00000074109"/>
<dbReference type="iPTMnet" id="P80431"/>
<dbReference type="PhosphoSitePlus" id="P80431"/>
<dbReference type="PaxDb" id="10116-ENSRNOP00000054370"/>
<dbReference type="Ensembl" id="ENSRNOT00000090007.2">
    <property type="protein sequence ID" value="ENSRNOP00000074109.1"/>
    <property type="gene ID" value="ENSRNOG00000054689.2"/>
</dbReference>
<dbReference type="GeneID" id="303393"/>
<dbReference type="KEGG" id="rno:303393"/>
<dbReference type="UCSC" id="RGD:727789">
    <property type="organism name" value="rat"/>
</dbReference>
<dbReference type="AGR" id="RGD:727789"/>
<dbReference type="CTD" id="1349"/>
<dbReference type="RGD" id="727789">
    <property type="gene designation" value="Cox7b"/>
</dbReference>
<dbReference type="eggNOG" id="ENOG502S9DG">
    <property type="taxonomic scope" value="Eukaryota"/>
</dbReference>
<dbReference type="GeneTree" id="ENSGT00390000012178"/>
<dbReference type="HOGENOM" id="CLU_172656_0_0_1"/>
<dbReference type="InParanoid" id="P80431"/>
<dbReference type="OMA" id="CTAIWSY"/>
<dbReference type="OrthoDB" id="2834at9989"/>
<dbReference type="PhylomeDB" id="P80431"/>
<dbReference type="TreeFam" id="TF105068"/>
<dbReference type="Reactome" id="R-RNO-5628897">
    <property type="pathway name" value="TP53 Regulates Metabolic Genes"/>
</dbReference>
<dbReference type="Reactome" id="R-RNO-611105">
    <property type="pathway name" value="Respiratory electron transport"/>
</dbReference>
<dbReference type="Reactome" id="R-RNO-9707564">
    <property type="pathway name" value="Cytoprotection by HMOX1"/>
</dbReference>
<dbReference type="Reactome" id="R-RNO-9864848">
    <property type="pathway name" value="Complex IV assembly"/>
</dbReference>
<dbReference type="UniPathway" id="UPA00705"/>
<dbReference type="PRO" id="PR:P80431"/>
<dbReference type="Proteomes" id="UP000002494">
    <property type="component" value="Chromosome X"/>
</dbReference>
<dbReference type="Bgee" id="ENSRNOG00000054689">
    <property type="expression patterns" value="Expressed in heart and 20 other cell types or tissues"/>
</dbReference>
<dbReference type="GO" id="GO:0005743">
    <property type="term" value="C:mitochondrial inner membrane"/>
    <property type="evidence" value="ECO:0000266"/>
    <property type="project" value="RGD"/>
</dbReference>
<dbReference type="GO" id="GO:0031966">
    <property type="term" value="C:mitochondrial membrane"/>
    <property type="evidence" value="ECO:0000266"/>
    <property type="project" value="RGD"/>
</dbReference>
<dbReference type="GO" id="GO:0005739">
    <property type="term" value="C:mitochondrion"/>
    <property type="evidence" value="ECO:0000318"/>
    <property type="project" value="GO_Central"/>
</dbReference>
<dbReference type="GO" id="GO:0045277">
    <property type="term" value="C:respiratory chain complex IV"/>
    <property type="evidence" value="ECO:0000266"/>
    <property type="project" value="RGD"/>
</dbReference>
<dbReference type="GO" id="GO:0007417">
    <property type="term" value="P:central nervous system development"/>
    <property type="evidence" value="ECO:0000250"/>
    <property type="project" value="UniProtKB"/>
</dbReference>
<dbReference type="GO" id="GO:0006123">
    <property type="term" value="P:mitochondrial electron transport, cytochrome c to oxygen"/>
    <property type="evidence" value="ECO:0007669"/>
    <property type="project" value="InterPro"/>
</dbReference>
<dbReference type="FunFam" id="4.10.51.10:FF:000001">
    <property type="entry name" value="Cytochrome c oxidase subunit 7B, mitochondrial"/>
    <property type="match status" value="1"/>
</dbReference>
<dbReference type="Gene3D" id="4.10.51.10">
    <property type="entry name" value="Cytochrome C Oxidase, chain K"/>
    <property type="match status" value="1"/>
</dbReference>
<dbReference type="InterPro" id="IPR008433">
    <property type="entry name" value="Cyt_c_oxidase_suVIIB"/>
</dbReference>
<dbReference type="InterPro" id="IPR023272">
    <property type="entry name" value="Cyt_c_oxidase_suVIIB_dom_sf"/>
</dbReference>
<dbReference type="PANTHER" id="PTHR16716">
    <property type="entry name" value="CYTOCHROME C OXIDASE SUBUNIT 7B, MITOCHONDRIAL"/>
    <property type="match status" value="1"/>
</dbReference>
<dbReference type="PANTHER" id="PTHR16716:SF0">
    <property type="entry name" value="CYTOCHROME C OXIDASE SUBUNIT 7B, MITOCHONDRIAL"/>
    <property type="match status" value="1"/>
</dbReference>
<dbReference type="Pfam" id="PF05392">
    <property type="entry name" value="COX7B"/>
    <property type="match status" value="1"/>
</dbReference>
<dbReference type="SUPFAM" id="SSF81423">
    <property type="entry name" value="Mitochondrial cytochrome c oxidase subunit VIIb"/>
    <property type="match status" value="1"/>
</dbReference>
<organism>
    <name type="scientific">Rattus norvegicus</name>
    <name type="common">Rat</name>
    <dbReference type="NCBI Taxonomy" id="10116"/>
    <lineage>
        <taxon>Eukaryota</taxon>
        <taxon>Metazoa</taxon>
        <taxon>Chordata</taxon>
        <taxon>Craniata</taxon>
        <taxon>Vertebrata</taxon>
        <taxon>Euteleostomi</taxon>
        <taxon>Mammalia</taxon>
        <taxon>Eutheria</taxon>
        <taxon>Euarchontoglires</taxon>
        <taxon>Glires</taxon>
        <taxon>Rodentia</taxon>
        <taxon>Myomorpha</taxon>
        <taxon>Muroidea</taxon>
        <taxon>Muridae</taxon>
        <taxon>Murinae</taxon>
        <taxon>Rattus</taxon>
    </lineage>
</organism>
<reference key="1">
    <citation type="submission" date="2003-07" db="EMBL/GenBank/DDBJ databases">
        <title>Rattus norvegicus cytochrome c oxidase subunit VIIb.</title>
        <authorList>
            <person name="Zhou L."/>
            <person name="Guo J."/>
            <person name="Ma Y."/>
        </authorList>
    </citation>
    <scope>NUCLEOTIDE SEQUENCE [MRNA]</scope>
    <source>
        <strain>Sprague-Dawley</strain>
        <tissue>Brain stem</tissue>
    </source>
</reference>
<reference key="2">
    <citation type="journal article" date="2004" name="Genome Res.">
        <title>The status, quality, and expansion of the NIH full-length cDNA project: the Mammalian Gene Collection (MGC).</title>
        <authorList>
            <consortium name="The MGC Project Team"/>
        </authorList>
    </citation>
    <scope>NUCLEOTIDE SEQUENCE [LARGE SCALE MRNA]</scope>
    <source>
        <tissue>Kidney</tissue>
    </source>
</reference>
<reference key="3">
    <citation type="journal article" date="1995" name="Eur. J. Biochem.">
        <title>Cytochrome-c oxidase in developing rat heart. Enzymic properties and amino-terminal sequences suggest identity of the fetal heart and the adult liver isoform.</title>
        <authorList>
            <person name="Schaegger H."/>
            <person name="Noack H."/>
            <person name="Halangk W."/>
            <person name="Brandt U."/>
            <person name="von Jagow G."/>
        </authorList>
    </citation>
    <scope>PROTEIN SEQUENCE OF 25-34</scope>
    <source>
        <strain>Wistar</strain>
        <tissue>Liver</tissue>
    </source>
</reference>
<comment type="function">
    <text evidence="1 2">Component of the cytochrome c oxidase, the last enzyme in the mitochondrial electron transport chain which drives oxidative phosphorylation. The respiratory chain contains 3 multisubunit complexes succinate dehydrogenase (complex II, CII), ubiquinol-cytochrome c oxidoreductase (cytochrome b-c1 complex, complex III, CIII) and cytochrome c oxidase (complex IV, CIV), that cooperate to transfer electrons derived from NADH and succinate to molecular oxygen, creating an electrochemical gradient over the inner membrane that drives transmembrane transport and the ATP synthase. Cytochrome c oxidase is the component of the respiratory chain that catalyzes the reduction of oxygen to water. Electrons originating from reduced cytochrome c in the intermembrane space (IMS) are transferred via the dinuclear copper A center (CU(A)) of subunit 2 and heme A of subunit 1 to the active site in subunit 1, a binuclear center (BNC) formed by heme A3 and copper B (CU(B)). The BNC reduces molecular oxygen to 2 water molecules using 4 electrons from cytochrome c in the IMS and 4 protons from the mitochondrial matrix (By similarity). Plays a role in proper central nervous system (CNS) development in vertebrates (By similarity).</text>
</comment>
<comment type="pathway">
    <text evidence="1">Energy metabolism; oxidative phosphorylation.</text>
</comment>
<comment type="subunit">
    <text evidence="1">Component of the cytochrome c oxidase (complex IV, CIV), a multisubunit enzyme composed of 14 subunits. The complex is composed of a catalytic core of 3 subunits MT-CO1, MT-CO2 and MT-CO3, encoded in the mitochondrial DNA, and 11 supernumerary subunits COX4I, COX5A, COX5B, COX6A, COX6B, COX6C, COX7A, COX7B, COX7C, COX8 and NDUFA4, which are encoded in the nuclear genome. The complex exists as a monomer or a dimer and forms supercomplexes (SCs) in the inner mitochondrial membrane with NADH-ubiquinone oxidoreductase (complex I, CI) and ubiquinol-cytochrome c oxidoreductase (cytochrome b-c1 complex, complex III, CIII), resulting in different assemblies (supercomplex SCI(1)III(2)IV(1) and megacomplex MCI(2)III(2)IV(2)).</text>
</comment>
<comment type="subcellular location">
    <subcellularLocation>
        <location evidence="1">Mitochondrion inner membrane</location>
        <topology evidence="1">Single-pass membrane protein</topology>
    </subcellularLocation>
</comment>
<comment type="similarity">
    <text evidence="4">Belongs to the cytochrome c oxidase VIIb family.</text>
</comment>
<accession>P80431</accession>
<accession>Q6AYA9</accession>
<accession>Q7TPH1</accession>